<organism>
    <name type="scientific">Acinetobacter baumannii (strain ATCC 17978 / DSM 105126 / CIP 53.77 / LMG 1025 / NCDC KC755 / 5377)</name>
    <dbReference type="NCBI Taxonomy" id="400667"/>
    <lineage>
        <taxon>Bacteria</taxon>
        <taxon>Pseudomonadati</taxon>
        <taxon>Pseudomonadota</taxon>
        <taxon>Gammaproteobacteria</taxon>
        <taxon>Moraxellales</taxon>
        <taxon>Moraxellaceae</taxon>
        <taxon>Acinetobacter</taxon>
        <taxon>Acinetobacter calcoaceticus/baumannii complex</taxon>
    </lineage>
</organism>
<name>TGT_ACIBT</name>
<protein>
    <recommendedName>
        <fullName evidence="1">Queuine tRNA-ribosyltransferase</fullName>
        <ecNumber evidence="1">2.4.2.29</ecNumber>
    </recommendedName>
    <alternativeName>
        <fullName evidence="1">Guanine insertion enzyme</fullName>
    </alternativeName>
    <alternativeName>
        <fullName evidence="1">tRNA-guanine transglycosylase</fullName>
    </alternativeName>
</protein>
<comment type="function">
    <text evidence="1">Catalyzes the base-exchange of a guanine (G) residue with the queuine precursor 7-aminomethyl-7-deazaguanine (PreQ1) at position 34 (anticodon wobble position) in tRNAs with GU(N) anticodons (tRNA-Asp, -Asn, -His and -Tyr). Catalysis occurs through a double-displacement mechanism. The nucleophile active site attacks the C1' of nucleotide 34 to detach the guanine base from the RNA, forming a covalent enzyme-RNA intermediate. The proton acceptor active site deprotonates the incoming PreQ1, allowing a nucleophilic attack on the C1' of the ribose to form the product. After dissociation, two additional enzymatic reactions on the tRNA convert PreQ1 to queuine (Q), resulting in the hypermodified nucleoside queuosine (7-(((4,5-cis-dihydroxy-2-cyclopenten-1-yl)amino)methyl)-7-deazaguanosine).</text>
</comment>
<comment type="catalytic activity">
    <reaction evidence="1">
        <text>7-aminomethyl-7-carbaguanine + guanosine(34) in tRNA = 7-aminomethyl-7-carbaguanosine(34) in tRNA + guanine</text>
        <dbReference type="Rhea" id="RHEA:24104"/>
        <dbReference type="Rhea" id="RHEA-COMP:10341"/>
        <dbReference type="Rhea" id="RHEA-COMP:10342"/>
        <dbReference type="ChEBI" id="CHEBI:16235"/>
        <dbReference type="ChEBI" id="CHEBI:58703"/>
        <dbReference type="ChEBI" id="CHEBI:74269"/>
        <dbReference type="ChEBI" id="CHEBI:82833"/>
        <dbReference type="EC" id="2.4.2.29"/>
    </reaction>
</comment>
<comment type="cofactor">
    <cofactor evidence="1">
        <name>Zn(2+)</name>
        <dbReference type="ChEBI" id="CHEBI:29105"/>
    </cofactor>
    <text evidence="1">Binds 1 zinc ion per subunit.</text>
</comment>
<comment type="pathway">
    <text evidence="1">tRNA modification; tRNA-queuosine biosynthesis.</text>
</comment>
<comment type="subunit">
    <text evidence="1">Homodimer. Within each dimer, one monomer is responsible for RNA recognition and catalysis, while the other monomer binds to the replacement base PreQ1.</text>
</comment>
<comment type="similarity">
    <text evidence="1">Belongs to the queuine tRNA-ribosyltransferase family.</text>
</comment>
<evidence type="ECO:0000255" key="1">
    <source>
        <dbReference type="HAMAP-Rule" id="MF_00168"/>
    </source>
</evidence>
<proteinExistence type="inferred from homology"/>
<reference key="1">
    <citation type="journal article" date="2007" name="Genes Dev.">
        <title>New insights into Acinetobacter baumannii pathogenesis revealed by high-density pyrosequencing and transposon mutagenesis.</title>
        <authorList>
            <person name="Smith M.G."/>
            <person name="Gianoulis T.A."/>
            <person name="Pukatzki S."/>
            <person name="Mekalanos J.J."/>
            <person name="Ornston L.N."/>
            <person name="Gerstein M."/>
            <person name="Snyder M."/>
        </authorList>
    </citation>
    <scope>NUCLEOTIDE SEQUENCE [LARGE SCALE GENOMIC DNA]</scope>
    <source>
        <strain>ATCC 17978 / DSM 105126 / CIP 53.77 / LMG 1025 / NCDC KC755 / 5377</strain>
    </source>
</reference>
<gene>
    <name evidence="1" type="primary">tgt</name>
    <name type="ordered locus">A1S_2912</name>
</gene>
<keyword id="KW-0328">Glycosyltransferase</keyword>
<keyword id="KW-0479">Metal-binding</keyword>
<keyword id="KW-0671">Queuosine biosynthesis</keyword>
<keyword id="KW-0808">Transferase</keyword>
<keyword id="KW-0819">tRNA processing</keyword>
<keyword id="KW-0862">Zinc</keyword>
<feature type="chain" id="PRO_1000097524" description="Queuine tRNA-ribosyltransferase">
    <location>
        <begin position="1"/>
        <end position="377"/>
    </location>
</feature>
<feature type="region of interest" description="RNA binding" evidence="1">
    <location>
        <begin position="246"/>
        <end position="252"/>
    </location>
</feature>
<feature type="region of interest" description="RNA binding; important for wobble base 34 recognition" evidence="1">
    <location>
        <begin position="270"/>
        <end position="274"/>
    </location>
</feature>
<feature type="active site" description="Proton acceptor" evidence="1">
    <location>
        <position position="89"/>
    </location>
</feature>
<feature type="active site" description="Nucleophile" evidence="1">
    <location>
        <position position="265"/>
    </location>
</feature>
<feature type="binding site" evidence="1">
    <location>
        <begin position="89"/>
        <end position="93"/>
    </location>
    <ligand>
        <name>substrate</name>
    </ligand>
</feature>
<feature type="binding site" evidence="1">
    <location>
        <position position="143"/>
    </location>
    <ligand>
        <name>substrate</name>
    </ligand>
</feature>
<feature type="binding site" evidence="1">
    <location>
        <position position="188"/>
    </location>
    <ligand>
        <name>substrate</name>
    </ligand>
</feature>
<feature type="binding site" evidence="1">
    <location>
        <position position="215"/>
    </location>
    <ligand>
        <name>substrate</name>
    </ligand>
</feature>
<feature type="binding site" evidence="1">
    <location>
        <position position="303"/>
    </location>
    <ligand>
        <name>Zn(2+)</name>
        <dbReference type="ChEBI" id="CHEBI:29105"/>
    </ligand>
</feature>
<feature type="binding site" evidence="1">
    <location>
        <position position="305"/>
    </location>
    <ligand>
        <name>Zn(2+)</name>
        <dbReference type="ChEBI" id="CHEBI:29105"/>
    </ligand>
</feature>
<feature type="binding site" evidence="1">
    <location>
        <position position="308"/>
    </location>
    <ligand>
        <name>Zn(2+)</name>
        <dbReference type="ChEBI" id="CHEBI:29105"/>
    </ligand>
</feature>
<feature type="binding site" evidence="1">
    <location>
        <position position="334"/>
    </location>
    <ligand>
        <name>Zn(2+)</name>
        <dbReference type="ChEBI" id="CHEBI:29105"/>
    </ligand>
</feature>
<sequence length="377" mass="42912">MKFEKLGQSGRARRGRLTLEHGVVETPVFMPVGTYGTVKGMLPRDIEDIQAQIILGNTFHLYLRPGLEVIKQHGGLHDFIKWNKPILTDSGGFQVFSLGAMRKIKEEGVTFRSPIDGSKVFLSPEISMEIQHVLNSDIVMIFDECTPYPATHEEAQKSLQLSLRWAKRCKAHHHDELKNKNALFGIIQGGMYEDLRDESLNGLLEIGFDGYAIGGLSVGEPKEEMIKVLDYLPNKMPHDKPRYLMGVGKPEDIVEAVRRGVDMFDCVMPTRNARNGHYFVTDGLVRIRNSKYRHDQGPLDPHCDCYTCKNFTRAYLFHLEKCGEMLASMLGTIHNLRYYQRLTEGMRDALDNGTFDEFVQDFYARRGLEVPPCPVDE</sequence>
<accession>A3M8S3</accession>
<dbReference type="EC" id="2.4.2.29" evidence="1"/>
<dbReference type="EMBL" id="CP000521">
    <property type="protein sequence ID" value="ABO13317.2"/>
    <property type="molecule type" value="Genomic_DNA"/>
</dbReference>
<dbReference type="RefSeq" id="WP_000667229.1">
    <property type="nucleotide sequence ID" value="NZ_CP053098.1"/>
</dbReference>
<dbReference type="SMR" id="A3M8S3"/>
<dbReference type="KEGG" id="acb:A1S_2912"/>
<dbReference type="HOGENOM" id="CLU_022060_0_1_6"/>
<dbReference type="UniPathway" id="UPA00392"/>
<dbReference type="GO" id="GO:0005829">
    <property type="term" value="C:cytosol"/>
    <property type="evidence" value="ECO:0007669"/>
    <property type="project" value="TreeGrafter"/>
</dbReference>
<dbReference type="GO" id="GO:0046872">
    <property type="term" value="F:metal ion binding"/>
    <property type="evidence" value="ECO:0007669"/>
    <property type="project" value="UniProtKB-KW"/>
</dbReference>
<dbReference type="GO" id="GO:0008479">
    <property type="term" value="F:tRNA-guanosine(34) queuine transglycosylase activity"/>
    <property type="evidence" value="ECO:0007669"/>
    <property type="project" value="UniProtKB-UniRule"/>
</dbReference>
<dbReference type="GO" id="GO:0008616">
    <property type="term" value="P:queuosine biosynthetic process"/>
    <property type="evidence" value="ECO:0007669"/>
    <property type="project" value="UniProtKB-UniRule"/>
</dbReference>
<dbReference type="GO" id="GO:0002099">
    <property type="term" value="P:tRNA wobble guanine modification"/>
    <property type="evidence" value="ECO:0007669"/>
    <property type="project" value="TreeGrafter"/>
</dbReference>
<dbReference type="GO" id="GO:0101030">
    <property type="term" value="P:tRNA-guanine transglycosylation"/>
    <property type="evidence" value="ECO:0007669"/>
    <property type="project" value="InterPro"/>
</dbReference>
<dbReference type="FunFam" id="3.20.20.105:FF:000001">
    <property type="entry name" value="Queuine tRNA-ribosyltransferase"/>
    <property type="match status" value="1"/>
</dbReference>
<dbReference type="Gene3D" id="3.20.20.105">
    <property type="entry name" value="Queuine tRNA-ribosyltransferase-like"/>
    <property type="match status" value="1"/>
</dbReference>
<dbReference type="HAMAP" id="MF_00168">
    <property type="entry name" value="Q_tRNA_Tgt"/>
    <property type="match status" value="1"/>
</dbReference>
<dbReference type="InterPro" id="IPR050076">
    <property type="entry name" value="ArchSynthase1/Queuine_TRR"/>
</dbReference>
<dbReference type="InterPro" id="IPR004803">
    <property type="entry name" value="TGT"/>
</dbReference>
<dbReference type="InterPro" id="IPR036511">
    <property type="entry name" value="TGT-like_sf"/>
</dbReference>
<dbReference type="InterPro" id="IPR002616">
    <property type="entry name" value="tRNA_ribo_trans-like"/>
</dbReference>
<dbReference type="NCBIfam" id="TIGR00430">
    <property type="entry name" value="Q_tRNA_tgt"/>
    <property type="match status" value="1"/>
</dbReference>
<dbReference type="NCBIfam" id="TIGR00449">
    <property type="entry name" value="tgt_general"/>
    <property type="match status" value="1"/>
</dbReference>
<dbReference type="PANTHER" id="PTHR46499">
    <property type="entry name" value="QUEUINE TRNA-RIBOSYLTRANSFERASE"/>
    <property type="match status" value="1"/>
</dbReference>
<dbReference type="PANTHER" id="PTHR46499:SF1">
    <property type="entry name" value="QUEUINE TRNA-RIBOSYLTRANSFERASE"/>
    <property type="match status" value="1"/>
</dbReference>
<dbReference type="Pfam" id="PF01702">
    <property type="entry name" value="TGT"/>
    <property type="match status" value="1"/>
</dbReference>
<dbReference type="SUPFAM" id="SSF51713">
    <property type="entry name" value="tRNA-guanine transglycosylase"/>
    <property type="match status" value="1"/>
</dbReference>